<name>FM522_ASPTN</name>
<organism>
    <name type="scientific">Aspergillus terreus (strain NIH 2624 / FGSC A1156)</name>
    <dbReference type="NCBI Taxonomy" id="341663"/>
    <lineage>
        <taxon>Eukaryota</taxon>
        <taxon>Fungi</taxon>
        <taxon>Dikarya</taxon>
        <taxon>Ascomycota</taxon>
        <taxon>Pezizomycotina</taxon>
        <taxon>Eurotiomycetes</taxon>
        <taxon>Eurotiomycetidae</taxon>
        <taxon>Eurotiales</taxon>
        <taxon>Aspergillaceae</taxon>
        <taxon>Aspergillus</taxon>
        <taxon>Aspergillus subgen. Circumdati</taxon>
    </lineage>
</organism>
<accession>Q0CZ00</accession>
<dbReference type="EMBL" id="CH476595">
    <property type="protein sequence ID" value="EAU37841.1"/>
    <property type="molecule type" value="Genomic_DNA"/>
</dbReference>
<dbReference type="RefSeq" id="XP_001208449.1">
    <property type="nucleotide sequence ID" value="XM_001208449.1"/>
</dbReference>
<dbReference type="SMR" id="Q0CZ00"/>
<dbReference type="STRING" id="341663.Q0CZ00"/>
<dbReference type="EnsemblFungi" id="EAU37841">
    <property type="protein sequence ID" value="EAU37841"/>
    <property type="gene ID" value="ATEG_01084"/>
</dbReference>
<dbReference type="GeneID" id="4315671"/>
<dbReference type="VEuPathDB" id="FungiDB:ATEG_01084"/>
<dbReference type="eggNOG" id="KOG4039">
    <property type="taxonomic scope" value="Eukaryota"/>
</dbReference>
<dbReference type="HOGENOM" id="CLU_071330_3_0_1"/>
<dbReference type="OMA" id="CIENAKA"/>
<dbReference type="OrthoDB" id="430436at2759"/>
<dbReference type="Proteomes" id="UP000007963">
    <property type="component" value="Unassembled WGS sequence"/>
</dbReference>
<dbReference type="GO" id="GO:0005741">
    <property type="term" value="C:mitochondrial outer membrane"/>
    <property type="evidence" value="ECO:0007669"/>
    <property type="project" value="UniProtKB-SubCell"/>
</dbReference>
<dbReference type="GO" id="GO:0051170">
    <property type="term" value="P:import into nucleus"/>
    <property type="evidence" value="ECO:0007669"/>
    <property type="project" value="TreeGrafter"/>
</dbReference>
<dbReference type="FunFam" id="3.40.50.720:FF:000366">
    <property type="entry name" value="Protein FMP52, mitochondrial"/>
    <property type="match status" value="1"/>
</dbReference>
<dbReference type="Gene3D" id="3.40.50.720">
    <property type="entry name" value="NAD(P)-binding Rossmann-like Domain"/>
    <property type="match status" value="1"/>
</dbReference>
<dbReference type="InterPro" id="IPR016040">
    <property type="entry name" value="NAD(P)-bd_dom"/>
</dbReference>
<dbReference type="InterPro" id="IPR036291">
    <property type="entry name" value="NAD(P)-bd_dom_sf"/>
</dbReference>
<dbReference type="PANTHER" id="PTHR14097">
    <property type="entry name" value="OXIDOREDUCTASE HTATIP2"/>
    <property type="match status" value="1"/>
</dbReference>
<dbReference type="PANTHER" id="PTHR14097:SF7">
    <property type="entry name" value="OXIDOREDUCTASE HTATIP2"/>
    <property type="match status" value="1"/>
</dbReference>
<dbReference type="Pfam" id="PF13460">
    <property type="entry name" value="NAD_binding_10"/>
    <property type="match status" value="1"/>
</dbReference>
<dbReference type="SUPFAM" id="SSF51735">
    <property type="entry name" value="NAD(P)-binding Rossmann-fold domains"/>
    <property type="match status" value="1"/>
</dbReference>
<protein>
    <recommendedName>
        <fullName>Protein fmp52-2, mitochondrial</fullName>
    </recommendedName>
</protein>
<sequence length="229" mass="24302">MTAAAVFGCTGAVGSQILATLLASDAFSSVATVSRKLPTAESPKLQAIEEGDTSKWGTTIASLSPKPSVVFNAVGTTRAAAGGIQNQWKIDHDLCIEIAKAAKEAGVKTYVFISSGGTRGFLSRHVPYSKMKIGVEDAIKELGFEHAIILRPGMIIGREKSKAPLFEAIVGHLNKLGQGVQDRIGQDQLIIGRAAVAAARLAEDGKAPSKFWAVEMSDIVRLGRDEWKE</sequence>
<comment type="subcellular location">
    <subcellularLocation>
        <location evidence="1">Mitochondrion outer membrane</location>
        <topology evidence="1">Peripheral membrane protein</topology>
    </subcellularLocation>
</comment>
<comment type="similarity">
    <text evidence="2">Belongs to the FMP52 family.</text>
</comment>
<feature type="transit peptide" description="Mitochondrion">
    <location>
        <begin position="1"/>
        <end position="44"/>
    </location>
</feature>
<feature type="chain" id="PRO_0000301816" description="Protein fmp52-2, mitochondrial">
    <location>
        <begin position="45"/>
        <end position="229"/>
    </location>
</feature>
<gene>
    <name type="primary">fmp522</name>
    <name type="ORF">ATEG_01084</name>
</gene>
<keyword id="KW-0472">Membrane</keyword>
<keyword id="KW-0496">Mitochondrion</keyword>
<keyword id="KW-1000">Mitochondrion outer membrane</keyword>
<keyword id="KW-1185">Reference proteome</keyword>
<keyword id="KW-0809">Transit peptide</keyword>
<evidence type="ECO:0000250" key="1"/>
<evidence type="ECO:0000305" key="2"/>
<reference key="1">
    <citation type="submission" date="2005-09" db="EMBL/GenBank/DDBJ databases">
        <title>Annotation of the Aspergillus terreus NIH2624 genome.</title>
        <authorList>
            <person name="Birren B.W."/>
            <person name="Lander E.S."/>
            <person name="Galagan J.E."/>
            <person name="Nusbaum C."/>
            <person name="Devon K."/>
            <person name="Henn M."/>
            <person name="Ma L.-J."/>
            <person name="Jaffe D.B."/>
            <person name="Butler J."/>
            <person name="Alvarez P."/>
            <person name="Gnerre S."/>
            <person name="Grabherr M."/>
            <person name="Kleber M."/>
            <person name="Mauceli E.W."/>
            <person name="Brockman W."/>
            <person name="Rounsley S."/>
            <person name="Young S.K."/>
            <person name="LaButti K."/>
            <person name="Pushparaj V."/>
            <person name="DeCaprio D."/>
            <person name="Crawford M."/>
            <person name="Koehrsen M."/>
            <person name="Engels R."/>
            <person name="Montgomery P."/>
            <person name="Pearson M."/>
            <person name="Howarth C."/>
            <person name="Larson L."/>
            <person name="Luoma S."/>
            <person name="White J."/>
            <person name="Alvarado L."/>
            <person name="Kodira C.D."/>
            <person name="Zeng Q."/>
            <person name="Oleary S."/>
            <person name="Yandava C."/>
            <person name="Denning D.W."/>
            <person name="Nierman W.C."/>
            <person name="Milne T."/>
            <person name="Madden K."/>
        </authorList>
    </citation>
    <scope>NUCLEOTIDE SEQUENCE [LARGE SCALE GENOMIC DNA]</scope>
    <source>
        <strain>NIH 2624 / FGSC A1156</strain>
    </source>
</reference>
<proteinExistence type="inferred from homology"/>